<keyword id="KW-0963">Cytoplasm</keyword>
<keyword id="KW-0251">Elongation factor</keyword>
<keyword id="KW-0342">GTP-binding</keyword>
<keyword id="KW-0378">Hydrolase</keyword>
<keyword id="KW-0460">Magnesium</keyword>
<keyword id="KW-0479">Metal-binding</keyword>
<keyword id="KW-0547">Nucleotide-binding</keyword>
<keyword id="KW-0648">Protein biosynthesis</keyword>
<keyword id="KW-1185">Reference proteome</keyword>
<organism>
    <name type="scientific">Mycobacterium leprae (strain TN)</name>
    <dbReference type="NCBI Taxonomy" id="272631"/>
    <lineage>
        <taxon>Bacteria</taxon>
        <taxon>Bacillati</taxon>
        <taxon>Actinomycetota</taxon>
        <taxon>Actinomycetes</taxon>
        <taxon>Mycobacteriales</taxon>
        <taxon>Mycobacteriaceae</taxon>
        <taxon>Mycobacterium</taxon>
    </lineage>
</organism>
<gene>
    <name evidence="2" type="primary">tuf</name>
    <name type="ordered locus">ML1877</name>
</gene>
<reference key="1">
    <citation type="journal article" date="1993" name="Nucleic Acids Res.">
        <title>Nucleotide sequence of Mycobacterium leprae elongation factor (EF-Tu) gene.</title>
        <authorList>
            <person name="Silbak F."/>
            <person name="Bercovier H."/>
        </authorList>
    </citation>
    <scope>NUCLEOTIDE SEQUENCE [GENOMIC DNA]</scope>
</reference>
<reference key="2">
    <citation type="journal article" date="1993" name="Mol. Microbiol.">
        <title>Nucleotide sequence of the first cosmid from the Mycobacterium leprae genome project: structure and function of the Rif-Str regions.</title>
        <authorList>
            <person name="Honore N.T."/>
            <person name="Bergh S."/>
            <person name="Chanteau S."/>
            <person name="Doucet-Populaire F."/>
            <person name="Eiglmeier K."/>
            <person name="Garnier T."/>
            <person name="Georges C."/>
            <person name="Launois P."/>
            <person name="Limpaiboon T."/>
            <person name="Newton S."/>
            <person name="Niang K."/>
            <person name="del Portillo P."/>
            <person name="Ramesh G.R."/>
            <person name="Reddi P."/>
            <person name="Ridel P.R."/>
            <person name="Sittisombut N."/>
            <person name="Wu-Hunter S."/>
            <person name="Cole S.T."/>
        </authorList>
    </citation>
    <scope>NUCLEOTIDE SEQUENCE [GENOMIC DNA]</scope>
</reference>
<reference key="3">
    <citation type="journal article" date="1994" name="J. Biochem.">
        <title>Cloning and sequence determination of the gene coding for the elongation factor Tu of Mycobacterium leprae.</title>
        <authorList>
            <person name="Dhandayuthapani S."/>
            <person name="Banu J.M."/>
            <person name="Kashiwabara Y."/>
        </authorList>
    </citation>
    <scope>NUCLEOTIDE SEQUENCE [GENOMIC DNA]</scope>
</reference>
<reference key="4">
    <citation type="journal article" date="2001" name="Nature">
        <title>Massive gene decay in the leprosy bacillus.</title>
        <authorList>
            <person name="Cole S.T."/>
            <person name="Eiglmeier K."/>
            <person name="Parkhill J."/>
            <person name="James K.D."/>
            <person name="Thomson N.R."/>
            <person name="Wheeler P.R."/>
            <person name="Honore N."/>
            <person name="Garnier T."/>
            <person name="Churcher C.M."/>
            <person name="Harris D.E."/>
            <person name="Mungall K.L."/>
            <person name="Basham D."/>
            <person name="Brown D."/>
            <person name="Chillingworth T."/>
            <person name="Connor R."/>
            <person name="Davies R.M."/>
            <person name="Devlin K."/>
            <person name="Duthoy S."/>
            <person name="Feltwell T."/>
            <person name="Fraser A."/>
            <person name="Hamlin N."/>
            <person name="Holroyd S."/>
            <person name="Hornsby T."/>
            <person name="Jagels K."/>
            <person name="Lacroix C."/>
            <person name="Maclean J."/>
            <person name="Moule S."/>
            <person name="Murphy L.D."/>
            <person name="Oliver K."/>
            <person name="Quail M.A."/>
            <person name="Rajandream M.A."/>
            <person name="Rutherford K.M."/>
            <person name="Rutter S."/>
            <person name="Seeger K."/>
            <person name="Simon S."/>
            <person name="Simmonds M."/>
            <person name="Skelton J."/>
            <person name="Squares R."/>
            <person name="Squares S."/>
            <person name="Stevens K."/>
            <person name="Taylor K."/>
            <person name="Whitehead S."/>
            <person name="Woodward J.R."/>
            <person name="Barrell B.G."/>
        </authorList>
    </citation>
    <scope>NUCLEOTIDE SEQUENCE [LARGE SCALE GENOMIC DNA]</scope>
    <source>
        <strain>TN</strain>
    </source>
</reference>
<feature type="chain" id="PRO_0000091348" description="Elongation factor Tu">
    <location>
        <begin position="1"/>
        <end position="396"/>
    </location>
</feature>
<feature type="domain" description="tr-type G">
    <location>
        <begin position="10"/>
        <end position="205"/>
    </location>
</feature>
<feature type="region of interest" description="G1" evidence="1">
    <location>
        <begin position="19"/>
        <end position="26"/>
    </location>
</feature>
<feature type="region of interest" description="G2" evidence="1">
    <location>
        <begin position="62"/>
        <end position="66"/>
    </location>
</feature>
<feature type="region of interest" description="G3" evidence="1">
    <location>
        <begin position="83"/>
        <end position="86"/>
    </location>
</feature>
<feature type="region of interest" description="G4" evidence="1">
    <location>
        <begin position="138"/>
        <end position="141"/>
    </location>
</feature>
<feature type="region of interest" description="G5" evidence="1">
    <location>
        <begin position="175"/>
        <end position="177"/>
    </location>
</feature>
<feature type="binding site" evidence="2">
    <location>
        <begin position="19"/>
        <end position="26"/>
    </location>
    <ligand>
        <name>GTP</name>
        <dbReference type="ChEBI" id="CHEBI:37565"/>
    </ligand>
</feature>
<feature type="binding site" evidence="2">
    <location>
        <position position="26"/>
    </location>
    <ligand>
        <name>Mg(2+)</name>
        <dbReference type="ChEBI" id="CHEBI:18420"/>
    </ligand>
</feature>
<feature type="binding site" evidence="2">
    <location>
        <begin position="83"/>
        <end position="87"/>
    </location>
    <ligand>
        <name>GTP</name>
        <dbReference type="ChEBI" id="CHEBI:37565"/>
    </ligand>
</feature>
<feature type="binding site" evidence="2">
    <location>
        <begin position="138"/>
        <end position="141"/>
    </location>
    <ligand>
        <name>GTP</name>
        <dbReference type="ChEBI" id="CHEBI:37565"/>
    </ligand>
</feature>
<feature type="sequence conflict" description="In Ref. 2; CAA78674." evidence="3" ref="2">
    <original>GVPYILVALNKSDAVDDEELLELV</original>
    <variation>VYLTSWSHLTSPTPWTTRNYSSLS</variation>
    <location>
        <begin position="129"/>
        <end position="152"/>
    </location>
</feature>
<feature type="sequence conflict" description="In Ref. 2; CAA78674." evidence="3" ref="2">
    <original>L</original>
    <variation>V</variation>
    <location>
        <position position="281"/>
    </location>
</feature>
<feature type="sequence conflict" description="In Ref. 2; CAA78674." evidence="3" ref="2">
    <original>G</original>
    <variation>A</variation>
    <location>
        <position position="349"/>
    </location>
</feature>
<feature type="sequence conflict" description="In Ref. 3; BAA02982." evidence="3" ref="3">
    <original>R</original>
    <variation>P</variation>
    <location>
        <position position="384"/>
    </location>
</feature>
<evidence type="ECO:0000250" key="1"/>
<evidence type="ECO:0000255" key="2">
    <source>
        <dbReference type="HAMAP-Rule" id="MF_00118"/>
    </source>
</evidence>
<evidence type="ECO:0000305" key="3"/>
<dbReference type="EC" id="3.6.5.3" evidence="2"/>
<dbReference type="EMBL" id="L13276">
    <property type="protein sequence ID" value="AAA71969.1"/>
    <property type="molecule type" value="Unassigned_DNA"/>
</dbReference>
<dbReference type="EMBL" id="Z14314">
    <property type="protein sequence ID" value="CAA78674.1"/>
    <property type="molecule type" value="Genomic_DNA"/>
</dbReference>
<dbReference type="EMBL" id="D13869">
    <property type="protein sequence ID" value="BAA02982.2"/>
    <property type="molecule type" value="Genomic_DNA"/>
</dbReference>
<dbReference type="EMBL" id="AL583923">
    <property type="protein sequence ID" value="CAC30831.1"/>
    <property type="molecule type" value="Genomic_DNA"/>
</dbReference>
<dbReference type="PIR" id="G87143">
    <property type="entry name" value="G87143"/>
</dbReference>
<dbReference type="PIR" id="S31151">
    <property type="entry name" value="S31151"/>
</dbReference>
<dbReference type="RefSeq" id="NP_302267.1">
    <property type="nucleotide sequence ID" value="NC_002677.1"/>
</dbReference>
<dbReference type="RefSeq" id="WP_010908588.1">
    <property type="nucleotide sequence ID" value="NC_002677.1"/>
</dbReference>
<dbReference type="SMR" id="P30768"/>
<dbReference type="STRING" id="272631.gene:17575725"/>
<dbReference type="KEGG" id="mle:ML1877"/>
<dbReference type="PATRIC" id="fig|272631.5.peg.3551"/>
<dbReference type="Leproma" id="ML1877"/>
<dbReference type="eggNOG" id="COG0050">
    <property type="taxonomic scope" value="Bacteria"/>
</dbReference>
<dbReference type="HOGENOM" id="CLU_007265_0_1_11"/>
<dbReference type="OrthoDB" id="9803139at2"/>
<dbReference type="Proteomes" id="UP000000806">
    <property type="component" value="Chromosome"/>
</dbReference>
<dbReference type="GO" id="GO:0005829">
    <property type="term" value="C:cytosol"/>
    <property type="evidence" value="ECO:0007669"/>
    <property type="project" value="TreeGrafter"/>
</dbReference>
<dbReference type="GO" id="GO:0005525">
    <property type="term" value="F:GTP binding"/>
    <property type="evidence" value="ECO:0007669"/>
    <property type="project" value="UniProtKB-UniRule"/>
</dbReference>
<dbReference type="GO" id="GO:0003924">
    <property type="term" value="F:GTPase activity"/>
    <property type="evidence" value="ECO:0007669"/>
    <property type="project" value="InterPro"/>
</dbReference>
<dbReference type="GO" id="GO:0003746">
    <property type="term" value="F:translation elongation factor activity"/>
    <property type="evidence" value="ECO:0007669"/>
    <property type="project" value="UniProtKB-UniRule"/>
</dbReference>
<dbReference type="CDD" id="cd01884">
    <property type="entry name" value="EF_Tu"/>
    <property type="match status" value="1"/>
</dbReference>
<dbReference type="CDD" id="cd03697">
    <property type="entry name" value="EFTU_II"/>
    <property type="match status" value="1"/>
</dbReference>
<dbReference type="CDD" id="cd03707">
    <property type="entry name" value="EFTU_III"/>
    <property type="match status" value="1"/>
</dbReference>
<dbReference type="FunFam" id="2.40.30.10:FF:000001">
    <property type="entry name" value="Elongation factor Tu"/>
    <property type="match status" value="1"/>
</dbReference>
<dbReference type="FunFam" id="3.40.50.300:FF:000003">
    <property type="entry name" value="Elongation factor Tu"/>
    <property type="match status" value="1"/>
</dbReference>
<dbReference type="Gene3D" id="3.40.50.300">
    <property type="entry name" value="P-loop containing nucleotide triphosphate hydrolases"/>
    <property type="match status" value="1"/>
</dbReference>
<dbReference type="Gene3D" id="2.40.30.10">
    <property type="entry name" value="Translation factors"/>
    <property type="match status" value="2"/>
</dbReference>
<dbReference type="HAMAP" id="MF_00118_B">
    <property type="entry name" value="EF_Tu_B"/>
    <property type="match status" value="1"/>
</dbReference>
<dbReference type="InterPro" id="IPR041709">
    <property type="entry name" value="EF-Tu_GTP-bd"/>
</dbReference>
<dbReference type="InterPro" id="IPR050055">
    <property type="entry name" value="EF-Tu_GTPase"/>
</dbReference>
<dbReference type="InterPro" id="IPR004161">
    <property type="entry name" value="EFTu-like_2"/>
</dbReference>
<dbReference type="InterPro" id="IPR033720">
    <property type="entry name" value="EFTU_2"/>
</dbReference>
<dbReference type="InterPro" id="IPR031157">
    <property type="entry name" value="G_TR_CS"/>
</dbReference>
<dbReference type="InterPro" id="IPR027417">
    <property type="entry name" value="P-loop_NTPase"/>
</dbReference>
<dbReference type="InterPro" id="IPR005225">
    <property type="entry name" value="Small_GTP-bd"/>
</dbReference>
<dbReference type="InterPro" id="IPR000795">
    <property type="entry name" value="T_Tr_GTP-bd_dom"/>
</dbReference>
<dbReference type="InterPro" id="IPR009000">
    <property type="entry name" value="Transl_B-barrel_sf"/>
</dbReference>
<dbReference type="InterPro" id="IPR009001">
    <property type="entry name" value="Transl_elong_EF1A/Init_IF2_C"/>
</dbReference>
<dbReference type="InterPro" id="IPR004541">
    <property type="entry name" value="Transl_elong_EFTu/EF1A_bac/org"/>
</dbReference>
<dbReference type="InterPro" id="IPR004160">
    <property type="entry name" value="Transl_elong_EFTu/EF1A_C"/>
</dbReference>
<dbReference type="NCBIfam" id="TIGR00485">
    <property type="entry name" value="EF-Tu"/>
    <property type="match status" value="1"/>
</dbReference>
<dbReference type="NCBIfam" id="NF000766">
    <property type="entry name" value="PRK00049.1"/>
    <property type="match status" value="1"/>
</dbReference>
<dbReference type="NCBIfam" id="NF009372">
    <property type="entry name" value="PRK12735.1"/>
    <property type="match status" value="1"/>
</dbReference>
<dbReference type="NCBIfam" id="NF009373">
    <property type="entry name" value="PRK12736.1"/>
    <property type="match status" value="1"/>
</dbReference>
<dbReference type="NCBIfam" id="TIGR00231">
    <property type="entry name" value="small_GTP"/>
    <property type="match status" value="1"/>
</dbReference>
<dbReference type="PANTHER" id="PTHR43721:SF22">
    <property type="entry name" value="ELONGATION FACTOR TU, MITOCHONDRIAL"/>
    <property type="match status" value="1"/>
</dbReference>
<dbReference type="PANTHER" id="PTHR43721">
    <property type="entry name" value="ELONGATION FACTOR TU-RELATED"/>
    <property type="match status" value="1"/>
</dbReference>
<dbReference type="Pfam" id="PF00009">
    <property type="entry name" value="GTP_EFTU"/>
    <property type="match status" value="1"/>
</dbReference>
<dbReference type="Pfam" id="PF03144">
    <property type="entry name" value="GTP_EFTU_D2"/>
    <property type="match status" value="1"/>
</dbReference>
<dbReference type="Pfam" id="PF03143">
    <property type="entry name" value="GTP_EFTU_D3"/>
    <property type="match status" value="1"/>
</dbReference>
<dbReference type="PRINTS" id="PR00315">
    <property type="entry name" value="ELONGATNFCT"/>
</dbReference>
<dbReference type="SUPFAM" id="SSF50465">
    <property type="entry name" value="EF-Tu/eEF-1alpha/eIF2-gamma C-terminal domain"/>
    <property type="match status" value="1"/>
</dbReference>
<dbReference type="SUPFAM" id="SSF52540">
    <property type="entry name" value="P-loop containing nucleoside triphosphate hydrolases"/>
    <property type="match status" value="1"/>
</dbReference>
<dbReference type="SUPFAM" id="SSF50447">
    <property type="entry name" value="Translation proteins"/>
    <property type="match status" value="1"/>
</dbReference>
<dbReference type="PROSITE" id="PS00301">
    <property type="entry name" value="G_TR_1"/>
    <property type="match status" value="1"/>
</dbReference>
<dbReference type="PROSITE" id="PS51722">
    <property type="entry name" value="G_TR_2"/>
    <property type="match status" value="1"/>
</dbReference>
<protein>
    <recommendedName>
        <fullName evidence="2">Elongation factor Tu</fullName>
        <shortName evidence="2">EF-Tu</shortName>
        <ecNumber evidence="2">3.6.5.3</ecNumber>
    </recommendedName>
</protein>
<comment type="function">
    <text evidence="2">GTP hydrolase that promotes the GTP-dependent binding of aminoacyl-tRNA to the A-site of ribosomes during protein biosynthesis.</text>
</comment>
<comment type="catalytic activity">
    <reaction evidence="2">
        <text>GTP + H2O = GDP + phosphate + H(+)</text>
        <dbReference type="Rhea" id="RHEA:19669"/>
        <dbReference type="ChEBI" id="CHEBI:15377"/>
        <dbReference type="ChEBI" id="CHEBI:15378"/>
        <dbReference type="ChEBI" id="CHEBI:37565"/>
        <dbReference type="ChEBI" id="CHEBI:43474"/>
        <dbReference type="ChEBI" id="CHEBI:58189"/>
        <dbReference type="EC" id="3.6.5.3"/>
    </reaction>
    <physiologicalReaction direction="left-to-right" evidence="2">
        <dbReference type="Rhea" id="RHEA:19670"/>
    </physiologicalReaction>
</comment>
<comment type="subunit">
    <text evidence="2">Monomer.</text>
</comment>
<comment type="subcellular location">
    <subcellularLocation>
        <location>Cytoplasm</location>
    </subcellularLocation>
</comment>
<comment type="similarity">
    <text evidence="2">Belongs to the TRAFAC class translation factor GTPase superfamily. Classic translation factor GTPase family. EF-Tu/EF-1A subfamily.</text>
</comment>
<proteinExistence type="inferred from homology"/>
<sequence length="396" mass="43668">MAKAKFERTKPHVNIGTIGHVDHGKTTLTAAITKVLHDKFPNLNESRAFDQIDNAPEERQRGITINISHVEYQTEKRHYAHVDAPGHADYIKNMITGAAQMDGAILVVAATDGPMPQTREHVLLARQVGVPYILVALNKSDAVDDEELLELVEMEVRELLAAQEFDEDAPVVRVSALKALEGDAKWVESVTQLMDAVDESIPAPVRETDKPFLMPVEDVFTITGRGTVVTGRVERGVVNVNEEVEIVGIRQTTTKTTVTGVEMFRKLLDQGQAGDNVGLLLRGIKREDVERGQVVIKPGTTTPHTEFEGQVYILSKDEGGRHTPFFNNYRPQFYFRTTDVTGVVTLPEGTEMVMPGDNTNISVTLIQPVAMDEGLRFAIREGGRTVGAGRVVKIIK</sequence>
<name>EFTU_MYCLE</name>
<accession>P30768</accession>